<evidence type="ECO:0000255" key="1">
    <source>
        <dbReference type="HAMAP-Rule" id="MF_01220"/>
    </source>
</evidence>
<dbReference type="EC" id="2.7.4.22" evidence="1"/>
<dbReference type="EMBL" id="U00089">
    <property type="protein sequence ID" value="AAB95858.1"/>
    <property type="molecule type" value="Genomic_DNA"/>
</dbReference>
<dbReference type="PIR" id="S73536">
    <property type="entry name" value="S73536"/>
</dbReference>
<dbReference type="RefSeq" id="NP_110321.1">
    <property type="nucleotide sequence ID" value="NC_000912.1"/>
</dbReference>
<dbReference type="SMR" id="P75165"/>
<dbReference type="STRING" id="272634.MPN_632"/>
<dbReference type="EnsemblBacteria" id="AAB95858">
    <property type="protein sequence ID" value="AAB95858"/>
    <property type="gene ID" value="MPN_632"/>
</dbReference>
<dbReference type="KEGG" id="mpn:MPN_632"/>
<dbReference type="PATRIC" id="fig|272634.6.peg.696"/>
<dbReference type="HOGENOM" id="CLU_033861_0_1_14"/>
<dbReference type="OrthoDB" id="9807458at2"/>
<dbReference type="BioCyc" id="MPNE272634:G1GJ3-1014-MONOMER"/>
<dbReference type="UniPathway" id="UPA00159">
    <property type="reaction ID" value="UER00275"/>
</dbReference>
<dbReference type="Proteomes" id="UP000000808">
    <property type="component" value="Chromosome"/>
</dbReference>
<dbReference type="GO" id="GO:0005737">
    <property type="term" value="C:cytoplasm"/>
    <property type="evidence" value="ECO:0007669"/>
    <property type="project" value="UniProtKB-SubCell"/>
</dbReference>
<dbReference type="GO" id="GO:0005524">
    <property type="term" value="F:ATP binding"/>
    <property type="evidence" value="ECO:0007669"/>
    <property type="project" value="UniProtKB-KW"/>
</dbReference>
<dbReference type="GO" id="GO:0033862">
    <property type="term" value="F:UMP kinase activity"/>
    <property type="evidence" value="ECO:0007669"/>
    <property type="project" value="UniProtKB-EC"/>
</dbReference>
<dbReference type="GO" id="GO:0044210">
    <property type="term" value="P:'de novo' CTP biosynthetic process"/>
    <property type="evidence" value="ECO:0007669"/>
    <property type="project" value="UniProtKB-UniRule"/>
</dbReference>
<dbReference type="GO" id="GO:0006225">
    <property type="term" value="P:UDP biosynthetic process"/>
    <property type="evidence" value="ECO:0007669"/>
    <property type="project" value="TreeGrafter"/>
</dbReference>
<dbReference type="Gene3D" id="3.40.1160.10">
    <property type="entry name" value="Acetylglutamate kinase-like"/>
    <property type="match status" value="1"/>
</dbReference>
<dbReference type="HAMAP" id="MF_01220_B">
    <property type="entry name" value="PyrH_B"/>
    <property type="match status" value="1"/>
</dbReference>
<dbReference type="InterPro" id="IPR036393">
    <property type="entry name" value="AceGlu_kinase-like_sf"/>
</dbReference>
<dbReference type="InterPro" id="IPR001048">
    <property type="entry name" value="Asp/Glu/Uridylate_kinase"/>
</dbReference>
<dbReference type="InterPro" id="IPR011817">
    <property type="entry name" value="Uridylate_kinase"/>
</dbReference>
<dbReference type="InterPro" id="IPR015963">
    <property type="entry name" value="Uridylate_kinase_bac"/>
</dbReference>
<dbReference type="NCBIfam" id="TIGR02075">
    <property type="entry name" value="pyrH_bact"/>
    <property type="match status" value="1"/>
</dbReference>
<dbReference type="PANTHER" id="PTHR42833">
    <property type="entry name" value="URIDYLATE KINASE"/>
    <property type="match status" value="1"/>
</dbReference>
<dbReference type="PANTHER" id="PTHR42833:SF4">
    <property type="entry name" value="URIDYLATE KINASE PUMPKIN, CHLOROPLASTIC"/>
    <property type="match status" value="1"/>
</dbReference>
<dbReference type="Pfam" id="PF00696">
    <property type="entry name" value="AA_kinase"/>
    <property type="match status" value="1"/>
</dbReference>
<dbReference type="PIRSF" id="PIRSF005650">
    <property type="entry name" value="Uridylate_kin"/>
    <property type="match status" value="1"/>
</dbReference>
<dbReference type="SUPFAM" id="SSF53633">
    <property type="entry name" value="Carbamate kinase-like"/>
    <property type="match status" value="1"/>
</dbReference>
<feature type="chain" id="PRO_0000143860" description="Uridylate kinase">
    <location>
        <begin position="1"/>
        <end position="235"/>
    </location>
</feature>
<feature type="binding site" evidence="1">
    <location>
        <begin position="8"/>
        <end position="11"/>
    </location>
    <ligand>
        <name>ATP</name>
        <dbReference type="ChEBI" id="CHEBI:30616"/>
    </ligand>
</feature>
<feature type="binding site" evidence="1">
    <location>
        <position position="49"/>
    </location>
    <ligand>
        <name>UMP</name>
        <dbReference type="ChEBI" id="CHEBI:57865"/>
    </ligand>
</feature>
<feature type="binding site" evidence="1">
    <location>
        <position position="50"/>
    </location>
    <ligand>
        <name>ATP</name>
        <dbReference type="ChEBI" id="CHEBI:30616"/>
    </ligand>
</feature>
<feature type="binding site" evidence="1">
    <location>
        <position position="54"/>
    </location>
    <ligand>
        <name>ATP</name>
        <dbReference type="ChEBI" id="CHEBI:30616"/>
    </ligand>
</feature>
<feature type="binding site" evidence="1">
    <location>
        <begin position="131"/>
        <end position="138"/>
    </location>
    <ligand>
        <name>UMP</name>
        <dbReference type="ChEBI" id="CHEBI:57865"/>
    </ligand>
</feature>
<feature type="binding site" evidence="1">
    <location>
        <position position="159"/>
    </location>
    <ligand>
        <name>ATP</name>
        <dbReference type="ChEBI" id="CHEBI:30616"/>
    </ligand>
</feature>
<feature type="binding site" evidence="1">
    <location>
        <position position="165"/>
    </location>
    <ligand>
        <name>ATP</name>
        <dbReference type="ChEBI" id="CHEBI:30616"/>
    </ligand>
</feature>
<feature type="binding site" evidence="1">
    <location>
        <position position="168"/>
    </location>
    <ligand>
        <name>ATP</name>
        <dbReference type="ChEBI" id="CHEBI:30616"/>
    </ligand>
</feature>
<reference key="1">
    <citation type="journal article" date="1996" name="Nucleic Acids Res.">
        <title>Complete sequence analysis of the genome of the bacterium Mycoplasma pneumoniae.</title>
        <authorList>
            <person name="Himmelreich R."/>
            <person name="Hilbert H."/>
            <person name="Plagens H."/>
            <person name="Pirkl E."/>
            <person name="Li B.-C."/>
            <person name="Herrmann R."/>
        </authorList>
    </citation>
    <scope>NUCLEOTIDE SEQUENCE [LARGE SCALE GENOMIC DNA]</scope>
    <source>
        <strain>ATCC 29342 / M129 / Subtype 1</strain>
    </source>
</reference>
<sequence length="235" mass="25420">MRLKILIKLSGAGMSADSSEPFSNQFLETVIAQLKQLVPNYQIGIVIGGGNIMRGKSCSDYNITEIAGHHLGIMATVINGAFLKAKFDSHKLNSTLLSAVSCPSLATHIVSQTTIDDAFKNHDIVIFAGGTGNPYFSTDTAVALRATQMQADIILIGKNGVDGVYTADPKKDKHAKFLASLTYAEAIKNDLQIMDITAFTMCKENNLKVIIFNINAEHAIIKALSKQGKYTLIEK</sequence>
<gene>
    <name evidence="1" type="primary">pyrH</name>
    <name type="synonym">smbA</name>
    <name type="ordered locus">MPN_632</name>
    <name type="ORF">MP210</name>
</gene>
<keyword id="KW-0067">ATP-binding</keyword>
<keyword id="KW-0963">Cytoplasm</keyword>
<keyword id="KW-0418">Kinase</keyword>
<keyword id="KW-0547">Nucleotide-binding</keyword>
<keyword id="KW-0665">Pyrimidine biosynthesis</keyword>
<keyword id="KW-1185">Reference proteome</keyword>
<keyword id="KW-0808">Transferase</keyword>
<protein>
    <recommendedName>
        <fullName evidence="1">Uridylate kinase</fullName>
        <shortName evidence="1">UK</shortName>
        <ecNumber evidence="1">2.7.4.22</ecNumber>
    </recommendedName>
    <alternativeName>
        <fullName evidence="1">Uridine monophosphate kinase</fullName>
        <shortName evidence="1">UMP kinase</shortName>
        <shortName evidence="1">UMPK</shortName>
    </alternativeName>
</protein>
<name>PYRH_MYCPN</name>
<proteinExistence type="inferred from homology"/>
<organism>
    <name type="scientific">Mycoplasma pneumoniae (strain ATCC 29342 / M129 / Subtype 1)</name>
    <name type="common">Mycoplasmoides pneumoniae</name>
    <dbReference type="NCBI Taxonomy" id="272634"/>
    <lineage>
        <taxon>Bacteria</taxon>
        <taxon>Bacillati</taxon>
        <taxon>Mycoplasmatota</taxon>
        <taxon>Mycoplasmoidales</taxon>
        <taxon>Mycoplasmoidaceae</taxon>
        <taxon>Mycoplasmoides</taxon>
    </lineage>
</organism>
<accession>P75165</accession>
<comment type="function">
    <text evidence="1">Catalyzes the reversible phosphorylation of UMP to UDP.</text>
</comment>
<comment type="catalytic activity">
    <reaction evidence="1">
        <text>UMP + ATP = UDP + ADP</text>
        <dbReference type="Rhea" id="RHEA:24400"/>
        <dbReference type="ChEBI" id="CHEBI:30616"/>
        <dbReference type="ChEBI" id="CHEBI:57865"/>
        <dbReference type="ChEBI" id="CHEBI:58223"/>
        <dbReference type="ChEBI" id="CHEBI:456216"/>
        <dbReference type="EC" id="2.7.4.22"/>
    </reaction>
</comment>
<comment type="activity regulation">
    <text evidence="1">Inhibited by UTP.</text>
</comment>
<comment type="pathway">
    <text evidence="1">Pyrimidine metabolism; CTP biosynthesis via de novo pathway; UDP from UMP (UMPK route): step 1/1.</text>
</comment>
<comment type="subunit">
    <text evidence="1">Homohexamer.</text>
</comment>
<comment type="subcellular location">
    <subcellularLocation>
        <location evidence="1">Cytoplasm</location>
    </subcellularLocation>
</comment>
<comment type="similarity">
    <text evidence="1">Belongs to the UMP kinase family.</text>
</comment>